<organism>
    <name type="scientific">Homo sapiens</name>
    <name type="common">Human</name>
    <dbReference type="NCBI Taxonomy" id="9606"/>
    <lineage>
        <taxon>Eukaryota</taxon>
        <taxon>Metazoa</taxon>
        <taxon>Chordata</taxon>
        <taxon>Craniata</taxon>
        <taxon>Vertebrata</taxon>
        <taxon>Euteleostomi</taxon>
        <taxon>Mammalia</taxon>
        <taxon>Eutheria</taxon>
        <taxon>Euarchontoglires</taxon>
        <taxon>Primates</taxon>
        <taxon>Haplorrhini</taxon>
        <taxon>Catarrhini</taxon>
        <taxon>Hominidae</taxon>
        <taxon>Homo</taxon>
    </lineage>
</organism>
<evidence type="ECO:0000250" key="1"/>
<evidence type="ECO:0000269" key="2">
    <source>
    </source>
</evidence>
<evidence type="ECO:0000269" key="3">
    <source>
    </source>
</evidence>
<evidence type="ECO:0000269" key="4">
    <source>
    </source>
</evidence>
<evidence type="ECO:0000269" key="5">
    <source>
    </source>
</evidence>
<evidence type="ECO:0000303" key="6">
    <source>
    </source>
</evidence>
<evidence type="ECO:0000303" key="7">
    <source>
    </source>
</evidence>
<evidence type="ECO:0000305" key="8"/>
<evidence type="ECO:0007744" key="9">
    <source>
    </source>
</evidence>
<reference key="1">
    <citation type="journal article" date="2007" name="BMC Genomics">
        <title>The full-ORF clone resource of the German cDNA consortium.</title>
        <authorList>
            <person name="Bechtel S."/>
            <person name="Rosenfelder H."/>
            <person name="Duda A."/>
            <person name="Schmidt C.P."/>
            <person name="Ernst U."/>
            <person name="Wellenreuther R."/>
            <person name="Mehrle A."/>
            <person name="Schuster C."/>
            <person name="Bahr A."/>
            <person name="Bloecker H."/>
            <person name="Heubner D."/>
            <person name="Hoerlein A."/>
            <person name="Michel G."/>
            <person name="Wedler H."/>
            <person name="Koehrer K."/>
            <person name="Ottenwaelder B."/>
            <person name="Poustka A."/>
            <person name="Wiemann S."/>
            <person name="Schupp I."/>
        </authorList>
    </citation>
    <scope>NUCLEOTIDE SEQUENCE [LARGE SCALE MRNA] (ISOFORMS 1 AND 4)</scope>
    <source>
        <tissue>Colon epithelium</tissue>
        <tissue>Endometrium</tissue>
    </source>
</reference>
<reference key="2">
    <citation type="journal article" date="2004" name="Genome Res.">
        <title>The status, quality, and expansion of the NIH full-length cDNA project: the Mammalian Gene Collection (MGC).</title>
        <authorList>
            <consortium name="The MGC Project Team"/>
        </authorList>
    </citation>
    <scope>NUCLEOTIDE SEQUENCE [LARGE SCALE MRNA] (ISOFORMS 2 AND 3)</scope>
    <source>
        <tissue>Testis</tissue>
    </source>
</reference>
<reference key="3">
    <citation type="journal article" date="2004" name="Nat. Genet.">
        <title>Complete sequencing and characterization of 21,243 full-length human cDNAs.</title>
        <authorList>
            <person name="Ota T."/>
            <person name="Suzuki Y."/>
            <person name="Nishikawa T."/>
            <person name="Otsuki T."/>
            <person name="Sugiyama T."/>
            <person name="Irie R."/>
            <person name="Wakamatsu A."/>
            <person name="Hayashi K."/>
            <person name="Sato H."/>
            <person name="Nagai K."/>
            <person name="Kimura K."/>
            <person name="Makita H."/>
            <person name="Sekine M."/>
            <person name="Obayashi M."/>
            <person name="Nishi T."/>
            <person name="Shibahara T."/>
            <person name="Tanaka T."/>
            <person name="Ishii S."/>
            <person name="Yamamoto J."/>
            <person name="Saito K."/>
            <person name="Kawai Y."/>
            <person name="Isono Y."/>
            <person name="Nakamura Y."/>
            <person name="Nagahari K."/>
            <person name="Murakami K."/>
            <person name="Yasuda T."/>
            <person name="Iwayanagi T."/>
            <person name="Wagatsuma M."/>
            <person name="Shiratori A."/>
            <person name="Sudo H."/>
            <person name="Hosoiri T."/>
            <person name="Kaku Y."/>
            <person name="Kodaira H."/>
            <person name="Kondo H."/>
            <person name="Sugawara M."/>
            <person name="Takahashi M."/>
            <person name="Kanda K."/>
            <person name="Yokoi T."/>
            <person name="Furuya T."/>
            <person name="Kikkawa E."/>
            <person name="Omura Y."/>
            <person name="Abe K."/>
            <person name="Kamihara K."/>
            <person name="Katsuta N."/>
            <person name="Sato K."/>
            <person name="Tanikawa M."/>
            <person name="Yamazaki M."/>
            <person name="Ninomiya K."/>
            <person name="Ishibashi T."/>
            <person name="Yamashita H."/>
            <person name="Murakawa K."/>
            <person name="Fujimori K."/>
            <person name="Tanai H."/>
            <person name="Kimata M."/>
            <person name="Watanabe M."/>
            <person name="Hiraoka S."/>
            <person name="Chiba Y."/>
            <person name="Ishida S."/>
            <person name="Ono Y."/>
            <person name="Takiguchi S."/>
            <person name="Watanabe S."/>
            <person name="Yosida M."/>
            <person name="Hotuta T."/>
            <person name="Kusano J."/>
            <person name="Kanehori K."/>
            <person name="Takahashi-Fujii A."/>
            <person name="Hara H."/>
            <person name="Tanase T.-O."/>
            <person name="Nomura Y."/>
            <person name="Togiya S."/>
            <person name="Komai F."/>
            <person name="Hara R."/>
            <person name="Takeuchi K."/>
            <person name="Arita M."/>
            <person name="Imose N."/>
            <person name="Musashino K."/>
            <person name="Yuuki H."/>
            <person name="Oshima A."/>
            <person name="Sasaki N."/>
            <person name="Aotsuka S."/>
            <person name="Yoshikawa Y."/>
            <person name="Matsunawa H."/>
            <person name="Ichihara T."/>
            <person name="Shiohata N."/>
            <person name="Sano S."/>
            <person name="Moriya S."/>
            <person name="Momiyama H."/>
            <person name="Satoh N."/>
            <person name="Takami S."/>
            <person name="Terashima Y."/>
            <person name="Suzuki O."/>
            <person name="Nakagawa S."/>
            <person name="Senoh A."/>
            <person name="Mizoguchi H."/>
            <person name="Goto Y."/>
            <person name="Shimizu F."/>
            <person name="Wakebe H."/>
            <person name="Hishigaki H."/>
            <person name="Watanabe T."/>
            <person name="Sugiyama A."/>
            <person name="Takemoto M."/>
            <person name="Kawakami B."/>
            <person name="Yamazaki M."/>
            <person name="Watanabe K."/>
            <person name="Kumagai A."/>
            <person name="Itakura S."/>
            <person name="Fukuzumi Y."/>
            <person name="Fujimori Y."/>
            <person name="Komiyama M."/>
            <person name="Tashiro H."/>
            <person name="Tanigami A."/>
            <person name="Fujiwara T."/>
            <person name="Ono T."/>
            <person name="Yamada K."/>
            <person name="Fujii Y."/>
            <person name="Ozaki K."/>
            <person name="Hirao M."/>
            <person name="Ohmori Y."/>
            <person name="Kawabata A."/>
            <person name="Hikiji T."/>
            <person name="Kobatake N."/>
            <person name="Inagaki H."/>
            <person name="Ikema Y."/>
            <person name="Okamoto S."/>
            <person name="Okitani R."/>
            <person name="Kawakami T."/>
            <person name="Noguchi S."/>
            <person name="Itoh T."/>
            <person name="Shigeta K."/>
            <person name="Senba T."/>
            <person name="Matsumura K."/>
            <person name="Nakajima Y."/>
            <person name="Mizuno T."/>
            <person name="Morinaga M."/>
            <person name="Sasaki M."/>
            <person name="Togashi T."/>
            <person name="Oyama M."/>
            <person name="Hata H."/>
            <person name="Watanabe M."/>
            <person name="Komatsu T."/>
            <person name="Mizushima-Sugano J."/>
            <person name="Satoh T."/>
            <person name="Shirai Y."/>
            <person name="Takahashi Y."/>
            <person name="Nakagawa K."/>
            <person name="Okumura K."/>
            <person name="Nagase T."/>
            <person name="Nomura N."/>
            <person name="Kikuchi H."/>
            <person name="Masuho Y."/>
            <person name="Yamashita R."/>
            <person name="Nakai K."/>
            <person name="Yada T."/>
            <person name="Nakamura Y."/>
            <person name="Ohara O."/>
            <person name="Isogai T."/>
            <person name="Sugano S."/>
        </authorList>
    </citation>
    <scope>NUCLEOTIDE SEQUENCE [LARGE SCALE MRNA] OF 199-1133 (ISOFORM 1)</scope>
    <source>
        <tissue>Ovary</tissue>
        <tissue>Trachea</tissue>
    </source>
</reference>
<reference key="4">
    <citation type="submission" date="2004-06" db="EMBL/GenBank/DDBJ databases">
        <title>Cloning of human full open reading frames in Gateway(TM) system entry vector (pDONR201).</title>
        <authorList>
            <person name="Ebert L."/>
            <person name="Schick M."/>
            <person name="Neubert P."/>
            <person name="Schatten R."/>
            <person name="Henze S."/>
            <person name="Korn B."/>
        </authorList>
    </citation>
    <scope>NUCLEOTIDE SEQUENCE [LARGE SCALE MRNA] OF 319-1133 (ISOFORM 1)</scope>
</reference>
<reference key="5">
    <citation type="journal article" date="2001" name="Genome Res.">
        <title>Towards a catalog of human genes and proteins: sequencing and analysis of 500 novel complete protein coding human cDNAs.</title>
        <authorList>
            <person name="Wiemann S."/>
            <person name="Weil B."/>
            <person name="Wellenreuther R."/>
            <person name="Gassenhuber J."/>
            <person name="Glassl S."/>
            <person name="Ansorge W."/>
            <person name="Boecher M."/>
            <person name="Bloecker H."/>
            <person name="Bauersachs S."/>
            <person name="Blum H."/>
            <person name="Lauber J."/>
            <person name="Duesterhoeft A."/>
            <person name="Beyer A."/>
            <person name="Koehrer K."/>
            <person name="Strack N."/>
            <person name="Mewes H.-W."/>
            <person name="Ottenwaelder B."/>
            <person name="Obermaier B."/>
            <person name="Tampe J."/>
            <person name="Heubner D."/>
            <person name="Wambutt R."/>
            <person name="Korn B."/>
            <person name="Klein M."/>
            <person name="Poustka A."/>
        </authorList>
    </citation>
    <scope>NUCLEOTIDE SEQUENCE [LARGE SCALE MRNA] OF 298-1133 (ISOFORM 1)</scope>
    <source>
        <tissue>Testis</tissue>
    </source>
</reference>
<reference key="6">
    <citation type="journal article" date="2009" name="Science">
        <title>Lysine acetylation targets protein complexes and co-regulates major cellular functions.</title>
        <authorList>
            <person name="Choudhary C."/>
            <person name="Kumar C."/>
            <person name="Gnad F."/>
            <person name="Nielsen M.L."/>
            <person name="Rehman M."/>
            <person name="Walther T.C."/>
            <person name="Olsen J.V."/>
            <person name="Mann M."/>
        </authorList>
    </citation>
    <scope>ACETYLATION [LARGE SCALE ANALYSIS] AT LYS-245</scope>
    <scope>IDENTIFICATION BY MASS SPECTROMETRY [LARGE SCALE ANALYSIS]</scope>
</reference>
<reference key="7">
    <citation type="journal article" date="2011" name="BMC Syst. Biol.">
        <title>Initial characterization of the human central proteome.</title>
        <authorList>
            <person name="Burkard T.R."/>
            <person name="Planyavsky M."/>
            <person name="Kaupe I."/>
            <person name="Breitwieser F.P."/>
            <person name="Buerckstuemmer T."/>
            <person name="Bennett K.L."/>
            <person name="Superti-Furga G."/>
            <person name="Colinge J."/>
        </authorList>
    </citation>
    <scope>IDENTIFICATION BY MASS SPECTROMETRY [LARGE SCALE ANALYSIS]</scope>
</reference>
<reference key="8">
    <citation type="journal article" date="2011" name="Mol. Biol. Cell">
        <title>C4orf41 and TTC-15 are mammalian TRAPP components with a role at an early stage in ER-to-Golgi trafficking.</title>
        <authorList>
            <person name="Scrivens P.J."/>
            <person name="Noueihed B."/>
            <person name="Shahrzad N."/>
            <person name="Hul S."/>
            <person name="Brunet S."/>
            <person name="Sacher M."/>
        </authorList>
    </citation>
    <scope>FUNCTION</scope>
    <scope>IDENTIFICATION IN TRAPP COMPLEX</scope>
</reference>
<reference key="9">
    <citation type="journal article" date="2013" name="Am. J. Hum. Genet.">
        <title>Recessive TRAPPC11 mutations cause a disease spectrum of limb girdle muscular dystrophy and myopathy with movement disorder and intellectual disability.</title>
        <authorList>
            <person name="Boegershausen N."/>
            <person name="Shahrzad N."/>
            <person name="Chong J.X."/>
            <person name="von Kleist-Retzow J.C."/>
            <person name="Stanga D."/>
            <person name="Li Y."/>
            <person name="Bernier F.P."/>
            <person name="Loucks C.M."/>
            <person name="Wirth R."/>
            <person name="Puffenberger E.G."/>
            <person name="Hegele R.A."/>
            <person name="Schreml J."/>
            <person name="Lapointe G."/>
            <person name="Keupp K."/>
            <person name="Brett C.L."/>
            <person name="Anderson R."/>
            <person name="Hahn A."/>
            <person name="Innes A.M."/>
            <person name="Suchowersky O."/>
            <person name="Mets M.B."/>
            <person name="Nuernberg G."/>
            <person name="McLeod D.R."/>
            <person name="Thiele H."/>
            <person name="Waggoner D."/>
            <person name="Altmueller J."/>
            <person name="Boycott K.M."/>
            <person name="Schoser B."/>
            <person name="Nuernberg P."/>
            <person name="Ober C."/>
            <person name="Heller R."/>
            <person name="Parboosingh J.S."/>
            <person name="Wollnik B."/>
            <person name="Sacher M."/>
            <person name="Lamont R.E."/>
        </authorList>
    </citation>
    <scope>VARIANT LGMDR18 ARG-980</scope>
</reference>
<reference key="10">
    <citation type="journal article" date="2017" name="Hum. Mutat.">
        <title>Mutations in TRAPPC11 are associated with a congenital disorder of glycosylation.</title>
        <authorList>
            <person name="Matalonga L."/>
            <person name="Bravo M."/>
            <person name="Serra-Peinado C."/>
            <person name="Garcia-Pelegri E."/>
            <person name="Ugarteburu O."/>
            <person name="Vidal S."/>
            <person name="Llambrich M."/>
            <person name="Quintana E."/>
            <person name="Fuster-Jorge P."/>
            <person name="Gonzalez-Bravo M.N."/>
            <person name="Beltran S."/>
            <person name="Dopazo J."/>
            <person name="Garcia-Garcia F."/>
            <person name="Foulquier F."/>
            <person name="Matthijs G."/>
            <person name="Mills P."/>
            <person name="Ribes A."/>
            <person name="Egea G."/>
            <person name="Briones P."/>
            <person name="Tort F."/>
            <person name="Giros M."/>
        </authorList>
    </citation>
    <scope>VARIANTS ALA-381 AND ALA-1104</scope>
    <scope>INVOLVEMENT IN DISEASE</scope>
    <scope>FUNCTION</scope>
    <scope>SUBCELLULAR LOCATION</scope>
</reference>
<reference key="11">
    <citation type="journal article" date="2018" name="Skelet. Muscle">
        <title>TRAPPC11 and GOSR2 mutations associate with hypoglycosylation of alpha-dystroglycan and muscular dystrophy.</title>
        <authorList>
            <person name="Larson A.A."/>
            <person name="Baker P.R. II"/>
            <person name="Milev M.P."/>
            <person name="Press C.A."/>
            <person name="Sokol R.J."/>
            <person name="Cox M.O."/>
            <person name="Lekostaj J.K."/>
            <person name="Stence A.A."/>
            <person name="Bossler A.D."/>
            <person name="Mueller J.M."/>
            <person name="Prematilake K."/>
            <person name="Tadjo T.F."/>
            <person name="Williams C.A."/>
            <person name="Sacher M."/>
            <person name="Moore S.A."/>
        </authorList>
    </citation>
    <scope>VARIANT LGMDR18 PRO-284</scope>
</reference>
<gene>
    <name type="primary">TRAPPC11</name>
    <name type="synonym">C4orf41</name>
</gene>
<protein>
    <recommendedName>
        <fullName>Trafficking protein particle complex subunit 11</fullName>
    </recommendedName>
</protein>
<keyword id="KW-0007">Acetylation</keyword>
<keyword id="KW-0025">Alternative splicing</keyword>
<keyword id="KW-0225">Disease variant</keyword>
<keyword id="KW-0931">ER-Golgi transport</keyword>
<keyword id="KW-0333">Golgi apparatus</keyword>
<keyword id="KW-0947">Limb-girdle muscular dystrophy</keyword>
<keyword id="KW-1267">Proteomics identification</keyword>
<keyword id="KW-1185">Reference proteome</keyword>
<keyword id="KW-0813">Transport</keyword>
<comment type="function">
    <text evidence="2 4">Involved in endoplasmic reticulum to Golgi apparatus trafficking at a very early stage.</text>
</comment>
<comment type="subunit">
    <text evidence="2">Component of the multisubunit TRAPP (transport protein particle) complex, which includes at least TRAPPC2, TRAPPC2L, TRAPPC3, TRAPPC3L, TRAPPC4, TRAPPC5, TRAPPC8, TRAPPC9, TRAPPC10, TRAPPC11 and TRAPPC12.</text>
</comment>
<comment type="subcellular location">
    <subcellularLocation>
        <location evidence="4">Golgi apparatus</location>
    </subcellularLocation>
    <subcellularLocation>
        <location evidence="1">Golgi apparatus</location>
        <location evidence="1">cis-Golgi network</location>
    </subcellularLocation>
</comment>
<comment type="alternative products">
    <event type="alternative splicing"/>
    <isoform>
        <id>Q7Z392-1</id>
        <name>1</name>
        <sequence type="displayed"/>
    </isoform>
    <isoform>
        <id>Q7Z392-2</id>
        <name>2</name>
        <sequence type="described" ref="VSP_035095 VSP_035098 VSP_035099"/>
    </isoform>
    <isoform>
        <id>Q7Z392-3</id>
        <name>3</name>
        <sequence type="described" ref="VSP_035098 VSP_035099"/>
    </isoform>
    <isoform>
        <id>Q7Z392-4</id>
        <name>4</name>
        <sequence type="described" ref="VSP_035096 VSP_035097"/>
    </isoform>
</comment>
<comment type="disease" evidence="3 5">
    <disease id="DI-03850">
        <name>Muscular dystrophy, limb-girdle, autosomal recessive 18</name>
        <acronym>LGMDR18</acronym>
        <description>A form of limb-girdle muscular dystrophy characterized by proximal muscle weakness with childhood onset, resulting in gait abnormalities and scapular winging. Serum creatine kinase is increased. A subset of patients may show a hyperkinetic movement disorder with chorea, ataxia, or dystonia and global developmental delay.</description>
        <dbReference type="MIM" id="615356"/>
    </disease>
    <text>The disease is caused by variants affecting the gene represented in this entry.</text>
</comment>
<comment type="similarity">
    <text evidence="8">Belongs to the TRAPPC11 family.</text>
</comment>
<comment type="sequence caution" evidence="8">
    <conflict type="erroneous initiation">
        <sequence resource="EMBL-CDS" id="BAB14240"/>
    </conflict>
    <text>Truncated N-terminus.</text>
</comment>
<comment type="sequence caution" evidence="8">
    <conflict type="erroneous initiation">
        <sequence resource="EMBL-CDS" id="BAB14556"/>
    </conflict>
    <text>Truncated N-terminus.</text>
</comment>
<comment type="sequence caution" evidence="8">
    <conflict type="erroneous termination">
        <sequence resource="EMBL-CDS" id="BAB15617"/>
    </conflict>
    <text>Truncated C-terminus.</text>
</comment>
<comment type="sequence caution" evidence="8">
    <conflict type="erroneous initiation">
        <sequence resource="EMBL-CDS" id="BAG37533"/>
    </conflict>
    <text>Truncated N-terminus.</text>
</comment>
<comment type="sequence caution" evidence="8">
    <conflict type="erroneous initiation">
        <sequence resource="EMBL-CDS" id="CAB66686"/>
    </conflict>
    <text>Truncated N-terminus.</text>
</comment>
<comment type="sequence caution" evidence="8">
    <conflict type="erroneous initiation">
        <sequence resource="EMBL-CDS" id="CAD91169"/>
    </conflict>
    <text>Extended N-terminus.</text>
</comment>
<comment type="sequence caution" evidence="8">
    <conflict type="erroneous initiation">
        <sequence resource="EMBL-CDS" id="CAD97983"/>
    </conflict>
    <text>Extended N-terminus.</text>
</comment>
<feature type="chain" id="PRO_0000348072" description="Trafficking protein particle complex subunit 11">
    <location>
        <begin position="1"/>
        <end position="1133"/>
    </location>
</feature>
<feature type="modified residue" description="N6-acetyllysine" evidence="9">
    <location>
        <position position="245"/>
    </location>
</feature>
<feature type="splice variant" id="VSP_035095" description="In isoform 2." evidence="6">
    <location>
        <begin position="1"/>
        <end position="656"/>
    </location>
</feature>
<feature type="splice variant" id="VSP_035096" description="In isoform 4." evidence="7">
    <original>CFCLQCPSLGNIEGGVATGHYIISWKRTSAMENIPIITTVITLPHVIVENIPLHVNA</original>
    <variation>LYYLLEKDLSNGEYPHHHNCHHSAARDCGEYPSPCECRSAVIWACQRVVTCQVSPTE</variation>
    <location>
        <begin position="962"/>
        <end position="1018"/>
    </location>
</feature>
<feature type="splice variant" id="VSP_035097" description="In isoform 4." evidence="7">
    <location>
        <begin position="1019"/>
        <end position="1133"/>
    </location>
</feature>
<feature type="splice variant" id="VSP_035098" description="In isoform 2 and isoform 3." evidence="6">
    <original>RILPGTEQEMLYNFYPLMAG</original>
    <variation>PAQAFYTYQYFCQATGSTHG</variation>
    <location>
        <begin position="1067"/>
        <end position="1086"/>
    </location>
</feature>
<feature type="splice variant" id="VSP_035099" description="In isoform 2 and isoform 3." evidence="6">
    <location>
        <begin position="1087"/>
        <end position="1133"/>
    </location>
</feature>
<feature type="sequence variant" id="VAR_087914" description="In LGMDR18; uncertain significance." evidence="5">
    <original>Q</original>
    <variation>P</variation>
    <location>
        <position position="284"/>
    </location>
</feature>
<feature type="sequence variant" id="VAR_078126" description="Found in a patient with congenital disorder of glycosylation; uncertain significance." evidence="4">
    <original>P</original>
    <variation>A</variation>
    <location>
        <position position="381"/>
    </location>
</feature>
<feature type="sequence variant" id="VAR_070158" description="In LGMDR18; dbSNP:rs397509417." evidence="3">
    <original>G</original>
    <variation>R</variation>
    <location>
        <position position="980"/>
    </location>
</feature>
<feature type="sequence variant" id="VAR_078127" description="Found in a patient with congenital disorder of glycosylation; uncertain significance; dbSNP:rs78663235." evidence="4">
    <original>T</original>
    <variation>A</variation>
    <location>
        <position position="1104"/>
    </location>
</feature>
<feature type="sequence conflict" description="In Ref. 2; AAH51724." evidence="8" ref="2">
    <original>T</original>
    <variation>A</variation>
    <location>
        <position position="70"/>
    </location>
</feature>
<feature type="sequence conflict" description="In Ref. 2; AAH51724." evidence="8" ref="2">
    <original>Q</original>
    <variation>L</variation>
    <location>
        <position position="197"/>
    </location>
</feature>
<feature type="sequence conflict" description="In Ref. 2; AAH51724." evidence="8" ref="2">
    <original>S</original>
    <variation>F</variation>
    <location>
        <position position="312"/>
    </location>
</feature>
<feature type="sequence conflict" description="In Ref. 3; BAG37533." evidence="8" ref="3">
    <original>W</original>
    <variation>R</variation>
    <location>
        <position position="397"/>
    </location>
</feature>
<feature type="sequence conflict" description="In Ref. 2; AAH51724." evidence="8" ref="2">
    <original>K</original>
    <variation>E</variation>
    <location>
        <position position="467"/>
    </location>
</feature>
<feature type="sequence conflict" description="In Ref. 3; BAB15617." evidence="8" ref="3">
    <original>N</original>
    <variation>K</variation>
    <location>
        <position position="544"/>
    </location>
</feature>
<feature type="sequence conflict" description="In Ref. 2; AAH51724." evidence="8" ref="2">
    <original>V</original>
    <variation>L</variation>
    <location>
        <position position="660"/>
    </location>
</feature>
<feature type="sequence conflict" description="In Ref. 3; BAB15617." evidence="8" ref="3">
    <original>P</original>
    <variation>L</variation>
    <location>
        <position position="661"/>
    </location>
</feature>
<feature type="sequence conflict" description="In Ref. 4; CAG38584." evidence="8" ref="4">
    <original>R</original>
    <variation>K</variation>
    <location>
        <position position="697"/>
    </location>
</feature>
<feature type="sequence conflict" description="In Ref. 3; BAB14556." evidence="8" ref="3">
    <location>
        <begin position="723"/>
        <end position="744"/>
    </location>
</feature>
<feature type="sequence conflict" description="In Ref. 1; CAD91169, 4; CAG38584 and 5; CAB66686." evidence="8" ref="1 4 5">
    <original>T</original>
    <variation>P</variation>
    <location>
        <position position="812"/>
    </location>
</feature>
<feature type="sequence conflict" description="In Ref. 3; BAB15617." evidence="8" ref="3">
    <original>Y</original>
    <variation>C</variation>
    <location>
        <position position="842"/>
    </location>
</feature>
<feature type="sequence conflict" description="In Ref. 3; BAB14240." evidence="8" ref="3">
    <original>V</original>
    <variation>I</variation>
    <location>
        <position position="865"/>
    </location>
</feature>
<feature type="sequence conflict" description="In Ref. 3; BAB14556." evidence="8" ref="3">
    <original>E</original>
    <variation>G</variation>
    <location>
        <position position="869"/>
    </location>
</feature>
<feature type="sequence conflict" description="In Ref. 3; BAB14240." evidence="8" ref="3">
    <original>N</original>
    <variation>S</variation>
    <location>
        <position position="1011"/>
    </location>
</feature>
<feature type="sequence conflict" description="In Ref. 3; BAB14556." evidence="8" ref="3">
    <original>L</original>
    <variation>S</variation>
    <location>
        <position position="1030"/>
    </location>
</feature>
<feature type="sequence conflict" description="In Ref. 1; CAD97983." evidence="8" ref="1">
    <original>I</original>
    <variation>L</variation>
    <location>
        <position position="1112"/>
    </location>
</feature>
<proteinExistence type="evidence at protein level"/>
<name>TPC11_HUMAN</name>
<dbReference type="EMBL" id="AL833571">
    <property type="protein sequence ID" value="CAD91169.1"/>
    <property type="status" value="ALT_INIT"/>
    <property type="molecule type" value="mRNA"/>
</dbReference>
<dbReference type="EMBL" id="BX538044">
    <property type="protein sequence ID" value="CAD97983.1"/>
    <property type="status" value="ALT_INIT"/>
    <property type="molecule type" value="mRNA"/>
</dbReference>
<dbReference type="EMBL" id="BC051724">
    <property type="protein sequence ID" value="AAH51724.1"/>
    <property type="molecule type" value="mRNA"/>
</dbReference>
<dbReference type="EMBL" id="BC139745">
    <property type="protein sequence ID" value="AAI39746.1"/>
    <property type="molecule type" value="mRNA"/>
</dbReference>
<dbReference type="EMBL" id="AK022778">
    <property type="protein sequence ID" value="BAB14240.1"/>
    <property type="status" value="ALT_INIT"/>
    <property type="molecule type" value="mRNA"/>
</dbReference>
<dbReference type="EMBL" id="AK023390">
    <property type="protein sequence ID" value="BAB14556.1"/>
    <property type="status" value="ALT_INIT"/>
    <property type="molecule type" value="mRNA"/>
</dbReference>
<dbReference type="EMBL" id="AK026992">
    <property type="protein sequence ID" value="BAB15617.1"/>
    <property type="status" value="ALT_SEQ"/>
    <property type="molecule type" value="mRNA"/>
</dbReference>
<dbReference type="EMBL" id="AK315057">
    <property type="protein sequence ID" value="BAG37533.1"/>
    <property type="status" value="ALT_INIT"/>
    <property type="molecule type" value="mRNA"/>
</dbReference>
<dbReference type="EMBL" id="CR533553">
    <property type="protein sequence ID" value="CAG38584.1"/>
    <property type="molecule type" value="mRNA"/>
</dbReference>
<dbReference type="EMBL" id="AL136752">
    <property type="protein sequence ID" value="CAB66686.1"/>
    <property type="status" value="ALT_INIT"/>
    <property type="molecule type" value="mRNA"/>
</dbReference>
<dbReference type="CCDS" id="CCDS34112.1">
    <molecule id="Q7Z392-1"/>
</dbReference>
<dbReference type="CCDS" id="CCDS47166.1">
    <molecule id="Q7Z392-3"/>
</dbReference>
<dbReference type="RefSeq" id="NP_068761.4">
    <molecule id="Q7Z392-1"/>
    <property type="nucleotide sequence ID" value="NM_021942.5"/>
</dbReference>
<dbReference type="RefSeq" id="NP_951008.1">
    <molecule id="Q7Z392-3"/>
    <property type="nucleotide sequence ID" value="NM_199053.3"/>
</dbReference>
<dbReference type="RefSeq" id="XP_024309947.1">
    <molecule id="Q7Z392-1"/>
    <property type="nucleotide sequence ID" value="XM_024454179.2"/>
</dbReference>
<dbReference type="RefSeq" id="XP_024309948.1">
    <molecule id="Q7Z392-1"/>
    <property type="nucleotide sequence ID" value="XM_024454180.2"/>
</dbReference>
<dbReference type="RefSeq" id="XP_054206676.1">
    <molecule id="Q7Z392-1"/>
    <property type="nucleotide sequence ID" value="XM_054350701.1"/>
</dbReference>
<dbReference type="RefSeq" id="XP_054206677.1">
    <molecule id="Q7Z392-1"/>
    <property type="nucleotide sequence ID" value="XM_054350702.1"/>
</dbReference>
<dbReference type="SMR" id="Q7Z392"/>
<dbReference type="BioGRID" id="121957">
    <property type="interactions" value="100"/>
</dbReference>
<dbReference type="ComplexPortal" id="CPX-4750">
    <property type="entry name" value="TRAPP III complex, TRAPPC2 variant"/>
</dbReference>
<dbReference type="ComplexPortal" id="CPX-6903">
    <property type="entry name" value="TRAPP III complex, TRAPPC2B variant"/>
</dbReference>
<dbReference type="CORUM" id="Q7Z392"/>
<dbReference type="DIP" id="DIP-48282N"/>
<dbReference type="FunCoup" id="Q7Z392">
    <property type="interactions" value="3497"/>
</dbReference>
<dbReference type="IntAct" id="Q7Z392">
    <property type="interactions" value="39"/>
</dbReference>
<dbReference type="STRING" id="9606.ENSP00000335371"/>
<dbReference type="iPTMnet" id="Q7Z392"/>
<dbReference type="PhosphoSitePlus" id="Q7Z392"/>
<dbReference type="BioMuta" id="TRAPPC11"/>
<dbReference type="DMDM" id="205696378"/>
<dbReference type="jPOST" id="Q7Z392"/>
<dbReference type="MassIVE" id="Q7Z392"/>
<dbReference type="PaxDb" id="9606-ENSP00000335371"/>
<dbReference type="PeptideAtlas" id="Q7Z392"/>
<dbReference type="ProteomicsDB" id="69012">
    <molecule id="Q7Z392-1"/>
</dbReference>
<dbReference type="ProteomicsDB" id="69013">
    <molecule id="Q7Z392-2"/>
</dbReference>
<dbReference type="ProteomicsDB" id="69014">
    <molecule id="Q7Z392-3"/>
</dbReference>
<dbReference type="ProteomicsDB" id="69015">
    <molecule id="Q7Z392-4"/>
</dbReference>
<dbReference type="Pumba" id="Q7Z392"/>
<dbReference type="Antibodypedia" id="55746">
    <property type="antibodies" value="32 antibodies from 9 providers"/>
</dbReference>
<dbReference type="DNASU" id="60684"/>
<dbReference type="Ensembl" id="ENST00000334690.11">
    <molecule id="Q7Z392-1"/>
    <property type="protein sequence ID" value="ENSP00000335371.6"/>
    <property type="gene ID" value="ENSG00000168538.16"/>
</dbReference>
<dbReference type="Ensembl" id="ENST00000357207.8">
    <molecule id="Q7Z392-3"/>
    <property type="protein sequence ID" value="ENSP00000349738.4"/>
    <property type="gene ID" value="ENSG00000168538.16"/>
</dbReference>
<dbReference type="GeneID" id="60684"/>
<dbReference type="KEGG" id="hsa:60684"/>
<dbReference type="MANE-Select" id="ENST00000334690.11">
    <property type="protein sequence ID" value="ENSP00000335371.6"/>
    <property type="RefSeq nucleotide sequence ID" value="NM_021942.6"/>
    <property type="RefSeq protein sequence ID" value="NP_068761.4"/>
</dbReference>
<dbReference type="UCSC" id="uc003ivw.3">
    <molecule id="Q7Z392-1"/>
    <property type="organism name" value="human"/>
</dbReference>
<dbReference type="AGR" id="HGNC:25751"/>
<dbReference type="CTD" id="60684"/>
<dbReference type="DisGeNET" id="60684"/>
<dbReference type="GeneCards" id="TRAPPC11"/>
<dbReference type="HGNC" id="HGNC:25751">
    <property type="gene designation" value="TRAPPC11"/>
</dbReference>
<dbReference type="HPA" id="ENSG00000168538">
    <property type="expression patterns" value="Low tissue specificity"/>
</dbReference>
<dbReference type="MalaCards" id="TRAPPC11"/>
<dbReference type="MIM" id="614138">
    <property type="type" value="gene"/>
</dbReference>
<dbReference type="MIM" id="615356">
    <property type="type" value="phenotype"/>
</dbReference>
<dbReference type="neXtProt" id="NX_Q7Z392"/>
<dbReference type="OpenTargets" id="ENSG00000168538"/>
<dbReference type="Orphanet" id="369847">
    <property type="disease" value="Intellectual disability-hyperkinetic movement-truncal ataxia syndrome"/>
</dbReference>
<dbReference type="Orphanet" id="369840">
    <property type="disease" value="TRAPPC11-related limb-girdle muscular dystrophy R18"/>
</dbReference>
<dbReference type="Orphanet" id="869">
    <property type="disease" value="Triple A syndrome"/>
</dbReference>
<dbReference type="PharmGKB" id="PA162379849"/>
<dbReference type="VEuPathDB" id="HostDB:ENSG00000168538"/>
<dbReference type="eggNOG" id="KOG4386">
    <property type="taxonomic scope" value="Eukaryota"/>
</dbReference>
<dbReference type="GeneTree" id="ENSGT00390000006550"/>
<dbReference type="HOGENOM" id="CLU_003649_0_0_1"/>
<dbReference type="InParanoid" id="Q7Z392"/>
<dbReference type="OMA" id="CVEYYRD"/>
<dbReference type="OrthoDB" id="6278596at2759"/>
<dbReference type="PAN-GO" id="Q7Z392">
    <property type="GO annotations" value="0 GO annotations based on evolutionary models"/>
</dbReference>
<dbReference type="PhylomeDB" id="Q7Z392"/>
<dbReference type="TreeFam" id="TF314022"/>
<dbReference type="PathwayCommons" id="Q7Z392"/>
<dbReference type="Reactome" id="R-HSA-8876198">
    <property type="pathway name" value="RAB GEFs exchange GTP for GDP on RABs"/>
</dbReference>
<dbReference type="SignaLink" id="Q7Z392"/>
<dbReference type="BioGRID-ORCS" id="60684">
    <property type="hits" value="775 hits in 1165 CRISPR screens"/>
</dbReference>
<dbReference type="ChiTaRS" id="TRAPPC11">
    <property type="organism name" value="human"/>
</dbReference>
<dbReference type="GenomeRNAi" id="60684"/>
<dbReference type="Pharos" id="Q7Z392">
    <property type="development level" value="Tbio"/>
</dbReference>
<dbReference type="PRO" id="PR:Q7Z392"/>
<dbReference type="Proteomes" id="UP000005640">
    <property type="component" value="Chromosome 4"/>
</dbReference>
<dbReference type="RNAct" id="Q7Z392">
    <property type="molecule type" value="protein"/>
</dbReference>
<dbReference type="Bgee" id="ENSG00000168538">
    <property type="expression patterns" value="Expressed in calcaneal tendon and 188 other cell types or tissues"/>
</dbReference>
<dbReference type="ExpressionAtlas" id="Q7Z392">
    <property type="expression patterns" value="baseline and differential"/>
</dbReference>
<dbReference type="GO" id="GO:0005737">
    <property type="term" value="C:cytoplasm"/>
    <property type="evidence" value="ECO:0000303"/>
    <property type="project" value="ComplexPortal"/>
</dbReference>
<dbReference type="GO" id="GO:0005829">
    <property type="term" value="C:cytosol"/>
    <property type="evidence" value="ECO:0000304"/>
    <property type="project" value="Reactome"/>
</dbReference>
<dbReference type="GO" id="GO:0005794">
    <property type="term" value="C:Golgi apparatus"/>
    <property type="evidence" value="ECO:0000314"/>
    <property type="project" value="UniProtKB"/>
</dbReference>
<dbReference type="GO" id="GO:0030008">
    <property type="term" value="C:TRAPP complex"/>
    <property type="evidence" value="ECO:0000315"/>
    <property type="project" value="UniProtKB"/>
</dbReference>
<dbReference type="GO" id="GO:1990072">
    <property type="term" value="C:TRAPPIII protein complex"/>
    <property type="evidence" value="ECO:0000303"/>
    <property type="project" value="ComplexPortal"/>
</dbReference>
<dbReference type="GO" id="GO:0045054">
    <property type="term" value="P:constitutive secretory pathway"/>
    <property type="evidence" value="ECO:0000315"/>
    <property type="project" value="UniProtKB"/>
</dbReference>
<dbReference type="GO" id="GO:0048208">
    <property type="term" value="P:COPII vesicle coating"/>
    <property type="evidence" value="ECO:0000303"/>
    <property type="project" value="ComplexPortal"/>
</dbReference>
<dbReference type="GO" id="GO:0006888">
    <property type="term" value="P:endoplasmic reticulum to Golgi vesicle-mediated transport"/>
    <property type="evidence" value="ECO:0000315"/>
    <property type="project" value="UniProtKB"/>
</dbReference>
<dbReference type="GO" id="GO:0007030">
    <property type="term" value="P:Golgi organization"/>
    <property type="evidence" value="ECO:0000315"/>
    <property type="project" value="UniProtKB"/>
</dbReference>
<dbReference type="GO" id="GO:0061635">
    <property type="term" value="P:regulation of protein complex stability"/>
    <property type="evidence" value="ECO:0000315"/>
    <property type="project" value="UniProtKB"/>
</dbReference>
<dbReference type="GO" id="GO:0099022">
    <property type="term" value="P:vesicle tethering"/>
    <property type="evidence" value="ECO:0000303"/>
    <property type="project" value="ComplexPortal"/>
</dbReference>
<dbReference type="InterPro" id="IPR021773">
    <property type="entry name" value="TPC11"/>
</dbReference>
<dbReference type="InterPro" id="IPR025876">
    <property type="entry name" value="TRAPPC11_C"/>
</dbReference>
<dbReference type="PANTHER" id="PTHR14374">
    <property type="entry name" value="FOIE GRAS"/>
    <property type="match status" value="1"/>
</dbReference>
<dbReference type="PANTHER" id="PTHR14374:SF0">
    <property type="entry name" value="TRAFFICKING PROTEIN PARTICLE COMPLEX SUBUNIT 11"/>
    <property type="match status" value="1"/>
</dbReference>
<dbReference type="Pfam" id="PF11817">
    <property type="entry name" value="Foie-gras_1"/>
    <property type="match status" value="1"/>
</dbReference>
<dbReference type="Pfam" id="PF12742">
    <property type="entry name" value="Gryzun-like"/>
    <property type="match status" value="1"/>
</dbReference>
<sequence>MSPTQWDFPVELCCRPMAFVTLTGLDVVYNAVHRAVWDAFCANRRADRVPISFKVLPGDHEYPKCRPKRTSYEWYIPKGILKTGWMNKHLNLVPALVVVFYELDWDEPQWKEKQSECATRVEIVRQSLQGRNTKVAVVLIQKKTPLPPGEDVIASERAAALCNACELSGKSLFVLPHTDHLVGYIIRLENAFYEHAQTYYYTEIRRVKSHKEFLNKTTHQLLFVRHQFKIAFFSELKQDTQNALKNYRTAYNLVHELRAHETNILEIKTMAGFINYKICRLCFQHNTPLDAIAQFRKHIDLCKKKIGSAELSFEHDAWMSKQFQAFGDLFDEAIKLGLTAIQTQNPGFYYQQAAYYAQERKQLAKTLCNHEASVMYPNPDPLETQTGVLDFYGQRSWRQGILSFDLSDPEKEKVGILAIQLKERNVVHSEIIITLLSNAVAQFKKYKCPRMKSHLMVQMGEEYYYAKDYTKALKLLDYVMCDYRSEGWWTLLTSVLTTALKCSYLMAQLKDYITYSLELLGRASTLKDDQKSRIEKNLINVLMNESPDPEPDCDILAVKTAQKLWADRISLAGSNIFTIGVQDFVPFVQCKAKFHAPSFHVDVPVQFDIYLKADCPHPIRFSKLCVSFNNQEYNQFCVIEEASKANEVLENLTQGKMCLVPGKTRKLLFKFVAKTEDVGKKIEITSVDLALGNETGRCVVLNWQGGGGDAASSQEALQAARSFKRRPKLPDNEVHWDSIIIQASTMIISRVPNISVHLLHEPPALTNEMYCLVVTVQSHEKTQIRDVKLTAGLKPGQDANLTQKTHVTLHGTELCDESYPALLTDIPVGDLHPGEQLEKMLYVRCGTVGSRMFLVYVSYLINTTVEEKEIVCKCHKDETVTIETVFPFDVAVKFVSTKFEHLERVYADIPFLLMTDLLSASPWALTIVSSELQLAPSMTTVDQLESQVDNVILQTGESASECFCLQCPSLGNIEGGVATGHYIISWKRTSAMENIPIITTVITLPHVIVENIPLHVNADLPSFGRVRESLPVKYHLQNKTDLVQDVEISVEPSDAFMFSGLKQIRLRILPGTEQEMLYNFYPLMAGYQQLPSLNINLLRFPNFTNQLLRRFIPTSIFVKPQGRLMDDTSIAAA</sequence>
<accession>Q7Z392</accession>
<accession>A4QPB8</accession>
<accession>B2RCD6</accession>
<accession>Q5U5I7</accession>
<accession>Q6FI73</accession>
<accession>Q86T25</accession>
<accession>Q9H0L1</accession>
<accession>Q9H5K9</accession>
<accession>Q9H8Q1</accession>
<accession>Q9H9I7</accession>